<reference key="1">
    <citation type="journal article" date="2005" name="Science">
        <title>The transcriptional landscape of the mammalian genome.</title>
        <authorList>
            <person name="Carninci P."/>
            <person name="Kasukawa T."/>
            <person name="Katayama S."/>
            <person name="Gough J."/>
            <person name="Frith M.C."/>
            <person name="Maeda N."/>
            <person name="Oyama R."/>
            <person name="Ravasi T."/>
            <person name="Lenhard B."/>
            <person name="Wells C."/>
            <person name="Kodzius R."/>
            <person name="Shimokawa K."/>
            <person name="Bajic V.B."/>
            <person name="Brenner S.E."/>
            <person name="Batalov S."/>
            <person name="Forrest A.R."/>
            <person name="Zavolan M."/>
            <person name="Davis M.J."/>
            <person name="Wilming L.G."/>
            <person name="Aidinis V."/>
            <person name="Allen J.E."/>
            <person name="Ambesi-Impiombato A."/>
            <person name="Apweiler R."/>
            <person name="Aturaliya R.N."/>
            <person name="Bailey T.L."/>
            <person name="Bansal M."/>
            <person name="Baxter L."/>
            <person name="Beisel K.W."/>
            <person name="Bersano T."/>
            <person name="Bono H."/>
            <person name="Chalk A.M."/>
            <person name="Chiu K.P."/>
            <person name="Choudhary V."/>
            <person name="Christoffels A."/>
            <person name="Clutterbuck D.R."/>
            <person name="Crowe M.L."/>
            <person name="Dalla E."/>
            <person name="Dalrymple B.P."/>
            <person name="de Bono B."/>
            <person name="Della Gatta G."/>
            <person name="di Bernardo D."/>
            <person name="Down T."/>
            <person name="Engstrom P."/>
            <person name="Fagiolini M."/>
            <person name="Faulkner G."/>
            <person name="Fletcher C.F."/>
            <person name="Fukushima T."/>
            <person name="Furuno M."/>
            <person name="Futaki S."/>
            <person name="Gariboldi M."/>
            <person name="Georgii-Hemming P."/>
            <person name="Gingeras T.R."/>
            <person name="Gojobori T."/>
            <person name="Green R.E."/>
            <person name="Gustincich S."/>
            <person name="Harbers M."/>
            <person name="Hayashi Y."/>
            <person name="Hensch T.K."/>
            <person name="Hirokawa N."/>
            <person name="Hill D."/>
            <person name="Huminiecki L."/>
            <person name="Iacono M."/>
            <person name="Ikeo K."/>
            <person name="Iwama A."/>
            <person name="Ishikawa T."/>
            <person name="Jakt M."/>
            <person name="Kanapin A."/>
            <person name="Katoh M."/>
            <person name="Kawasawa Y."/>
            <person name="Kelso J."/>
            <person name="Kitamura H."/>
            <person name="Kitano H."/>
            <person name="Kollias G."/>
            <person name="Krishnan S.P."/>
            <person name="Kruger A."/>
            <person name="Kummerfeld S.K."/>
            <person name="Kurochkin I.V."/>
            <person name="Lareau L.F."/>
            <person name="Lazarevic D."/>
            <person name="Lipovich L."/>
            <person name="Liu J."/>
            <person name="Liuni S."/>
            <person name="McWilliam S."/>
            <person name="Madan Babu M."/>
            <person name="Madera M."/>
            <person name="Marchionni L."/>
            <person name="Matsuda H."/>
            <person name="Matsuzawa S."/>
            <person name="Miki H."/>
            <person name="Mignone F."/>
            <person name="Miyake S."/>
            <person name="Morris K."/>
            <person name="Mottagui-Tabar S."/>
            <person name="Mulder N."/>
            <person name="Nakano N."/>
            <person name="Nakauchi H."/>
            <person name="Ng P."/>
            <person name="Nilsson R."/>
            <person name="Nishiguchi S."/>
            <person name="Nishikawa S."/>
            <person name="Nori F."/>
            <person name="Ohara O."/>
            <person name="Okazaki Y."/>
            <person name="Orlando V."/>
            <person name="Pang K.C."/>
            <person name="Pavan W.J."/>
            <person name="Pavesi G."/>
            <person name="Pesole G."/>
            <person name="Petrovsky N."/>
            <person name="Piazza S."/>
            <person name="Reed J."/>
            <person name="Reid J.F."/>
            <person name="Ring B.Z."/>
            <person name="Ringwald M."/>
            <person name="Rost B."/>
            <person name="Ruan Y."/>
            <person name="Salzberg S.L."/>
            <person name="Sandelin A."/>
            <person name="Schneider C."/>
            <person name="Schoenbach C."/>
            <person name="Sekiguchi K."/>
            <person name="Semple C.A."/>
            <person name="Seno S."/>
            <person name="Sessa L."/>
            <person name="Sheng Y."/>
            <person name="Shibata Y."/>
            <person name="Shimada H."/>
            <person name="Shimada K."/>
            <person name="Silva D."/>
            <person name="Sinclair B."/>
            <person name="Sperling S."/>
            <person name="Stupka E."/>
            <person name="Sugiura K."/>
            <person name="Sultana R."/>
            <person name="Takenaka Y."/>
            <person name="Taki K."/>
            <person name="Tammoja K."/>
            <person name="Tan S.L."/>
            <person name="Tang S."/>
            <person name="Taylor M.S."/>
            <person name="Tegner J."/>
            <person name="Teichmann S.A."/>
            <person name="Ueda H.R."/>
            <person name="van Nimwegen E."/>
            <person name="Verardo R."/>
            <person name="Wei C.L."/>
            <person name="Yagi K."/>
            <person name="Yamanishi H."/>
            <person name="Zabarovsky E."/>
            <person name="Zhu S."/>
            <person name="Zimmer A."/>
            <person name="Hide W."/>
            <person name="Bult C."/>
            <person name="Grimmond S.M."/>
            <person name="Teasdale R.D."/>
            <person name="Liu E.T."/>
            <person name="Brusic V."/>
            <person name="Quackenbush J."/>
            <person name="Wahlestedt C."/>
            <person name="Mattick J.S."/>
            <person name="Hume D.A."/>
            <person name="Kai C."/>
            <person name="Sasaki D."/>
            <person name="Tomaru Y."/>
            <person name="Fukuda S."/>
            <person name="Kanamori-Katayama M."/>
            <person name="Suzuki M."/>
            <person name="Aoki J."/>
            <person name="Arakawa T."/>
            <person name="Iida J."/>
            <person name="Imamura K."/>
            <person name="Itoh M."/>
            <person name="Kato T."/>
            <person name="Kawaji H."/>
            <person name="Kawagashira N."/>
            <person name="Kawashima T."/>
            <person name="Kojima M."/>
            <person name="Kondo S."/>
            <person name="Konno H."/>
            <person name="Nakano K."/>
            <person name="Ninomiya N."/>
            <person name="Nishio T."/>
            <person name="Okada M."/>
            <person name="Plessy C."/>
            <person name="Shibata K."/>
            <person name="Shiraki T."/>
            <person name="Suzuki S."/>
            <person name="Tagami M."/>
            <person name="Waki K."/>
            <person name="Watahiki A."/>
            <person name="Okamura-Oho Y."/>
            <person name="Suzuki H."/>
            <person name="Kawai J."/>
            <person name="Hayashizaki Y."/>
        </authorList>
    </citation>
    <scope>NUCLEOTIDE SEQUENCE [LARGE SCALE MRNA]</scope>
    <source>
        <strain>C57BL/6J</strain>
        <tissue>Head</tissue>
    </source>
</reference>
<reference key="2">
    <citation type="journal article" date="2009" name="PLoS Biol.">
        <title>Lineage-specific biology revealed by a finished genome assembly of the mouse.</title>
        <authorList>
            <person name="Church D.M."/>
            <person name="Goodstadt L."/>
            <person name="Hillier L.W."/>
            <person name="Zody M.C."/>
            <person name="Goldstein S."/>
            <person name="She X."/>
            <person name="Bult C.J."/>
            <person name="Agarwala R."/>
            <person name="Cherry J.L."/>
            <person name="DiCuccio M."/>
            <person name="Hlavina W."/>
            <person name="Kapustin Y."/>
            <person name="Meric P."/>
            <person name="Maglott D."/>
            <person name="Birtle Z."/>
            <person name="Marques A.C."/>
            <person name="Graves T."/>
            <person name="Zhou S."/>
            <person name="Teague B."/>
            <person name="Potamousis K."/>
            <person name="Churas C."/>
            <person name="Place M."/>
            <person name="Herschleb J."/>
            <person name="Runnheim R."/>
            <person name="Forrest D."/>
            <person name="Amos-Landgraf J."/>
            <person name="Schwartz D.C."/>
            <person name="Cheng Z."/>
            <person name="Lindblad-Toh K."/>
            <person name="Eichler E.E."/>
            <person name="Ponting C.P."/>
        </authorList>
    </citation>
    <scope>NUCLEOTIDE SEQUENCE [LARGE SCALE GENOMIC DNA]</scope>
    <source>
        <strain>C57BL/6J</strain>
    </source>
</reference>
<reference key="3">
    <citation type="journal article" date="2010" name="Cell">
        <title>A tissue-specific atlas of mouse protein phosphorylation and expression.</title>
        <authorList>
            <person name="Huttlin E.L."/>
            <person name="Jedrychowski M.P."/>
            <person name="Elias J.E."/>
            <person name="Goswami T."/>
            <person name="Rad R."/>
            <person name="Beausoleil S.A."/>
            <person name="Villen J."/>
            <person name="Haas W."/>
            <person name="Sowa M.E."/>
            <person name="Gygi S.P."/>
        </authorList>
    </citation>
    <scope>IDENTIFICATION BY MASS SPECTROMETRY [LARGE SCALE ANALYSIS]</scope>
    <source>
        <tissue>Brown adipose tissue</tissue>
        <tissue>Heart</tissue>
        <tissue>Kidney</tissue>
        <tissue>Liver</tissue>
        <tissue>Lung</tissue>
        <tissue>Pancreas</tissue>
        <tissue>Spleen</tissue>
        <tissue>Testis</tissue>
    </source>
</reference>
<protein>
    <recommendedName>
        <fullName>Conserved oligomeric Golgi complex subunit 5</fullName>
        <shortName>COG complex subunit 5</shortName>
    </recommendedName>
    <alternativeName>
        <fullName>Component of oligomeric Golgi complex 5</fullName>
    </alternativeName>
</protein>
<evidence type="ECO:0000250" key="1">
    <source>
        <dbReference type="UniProtKB" id="Q9UP83"/>
    </source>
</evidence>
<evidence type="ECO:0000250" key="2">
    <source>
        <dbReference type="UniProtKB" id="Q9VJD3"/>
    </source>
</evidence>
<evidence type="ECO:0000305" key="3"/>
<name>COG5_MOUSE</name>
<dbReference type="EMBL" id="AK030656">
    <property type="protein sequence ID" value="BAC27065.1"/>
    <property type="status" value="ALT_INIT"/>
    <property type="molecule type" value="mRNA"/>
</dbReference>
<dbReference type="EMBL" id="AC119950">
    <property type="status" value="NOT_ANNOTATED_CDS"/>
    <property type="molecule type" value="Genomic_DNA"/>
</dbReference>
<dbReference type="EMBL" id="AC125020">
    <property type="status" value="NOT_ANNOTATED_CDS"/>
    <property type="molecule type" value="Genomic_DNA"/>
</dbReference>
<dbReference type="EMBL" id="CT010463">
    <property type="status" value="NOT_ANNOTATED_CDS"/>
    <property type="molecule type" value="Genomic_DNA"/>
</dbReference>
<dbReference type="CCDS" id="CCDS49046.1"/>
<dbReference type="RefSeq" id="NP_001156598.1">
    <property type="nucleotide sequence ID" value="NM_001163126.1"/>
</dbReference>
<dbReference type="RefSeq" id="XP_011242170.1">
    <property type="nucleotide sequence ID" value="XM_011243868.2"/>
</dbReference>
<dbReference type="SMR" id="Q8C0L8"/>
<dbReference type="FunCoup" id="Q8C0L8">
    <property type="interactions" value="2547"/>
</dbReference>
<dbReference type="STRING" id="10090.ENSMUSP00000044797"/>
<dbReference type="GlyGen" id="Q8C0L8">
    <property type="glycosylation" value="2 sites"/>
</dbReference>
<dbReference type="iPTMnet" id="Q8C0L8"/>
<dbReference type="PhosphoSitePlus" id="Q8C0L8"/>
<dbReference type="SwissPalm" id="Q8C0L8"/>
<dbReference type="PaxDb" id="10090-ENSMUSP00000044797"/>
<dbReference type="PeptideAtlas" id="Q8C0L8"/>
<dbReference type="ProteomicsDB" id="283488"/>
<dbReference type="Pumba" id="Q8C0L8"/>
<dbReference type="Antibodypedia" id="17176">
    <property type="antibodies" value="46 antibodies from 14 providers"/>
</dbReference>
<dbReference type="Ensembl" id="ENSMUST00000036862.5">
    <property type="protein sequence ID" value="ENSMUSP00000044797.5"/>
    <property type="gene ID" value="ENSMUSG00000035933.6"/>
</dbReference>
<dbReference type="GeneID" id="238123"/>
<dbReference type="KEGG" id="mmu:238123"/>
<dbReference type="UCSC" id="uc007nhs.1">
    <property type="organism name" value="mouse"/>
</dbReference>
<dbReference type="AGR" id="MGI:2145130"/>
<dbReference type="CTD" id="10466"/>
<dbReference type="MGI" id="MGI:2145130">
    <property type="gene designation" value="Cog5"/>
</dbReference>
<dbReference type="VEuPathDB" id="HostDB:ENSMUSG00000035933"/>
<dbReference type="eggNOG" id="KOG2211">
    <property type="taxonomic scope" value="Eukaryota"/>
</dbReference>
<dbReference type="GeneTree" id="ENSGT00390000004586"/>
<dbReference type="HOGENOM" id="CLU_009839_1_0_1"/>
<dbReference type="InParanoid" id="Q8C0L8"/>
<dbReference type="OMA" id="MMVEYFE"/>
<dbReference type="OrthoDB" id="18786at2759"/>
<dbReference type="PhylomeDB" id="Q8C0L8"/>
<dbReference type="TreeFam" id="TF313139"/>
<dbReference type="Reactome" id="R-MMU-6807878">
    <property type="pathway name" value="COPI-mediated anterograde transport"/>
</dbReference>
<dbReference type="Reactome" id="R-MMU-6811438">
    <property type="pathway name" value="Intra-Golgi traffic"/>
</dbReference>
<dbReference type="Reactome" id="R-MMU-6811440">
    <property type="pathway name" value="Retrograde transport at the Trans-Golgi-Network"/>
</dbReference>
<dbReference type="BioGRID-ORCS" id="238123">
    <property type="hits" value="20 hits in 81 CRISPR screens"/>
</dbReference>
<dbReference type="ChiTaRS" id="Cog5">
    <property type="organism name" value="mouse"/>
</dbReference>
<dbReference type="PRO" id="PR:Q8C0L8"/>
<dbReference type="Proteomes" id="UP000000589">
    <property type="component" value="Chromosome 12"/>
</dbReference>
<dbReference type="RNAct" id="Q8C0L8">
    <property type="molecule type" value="protein"/>
</dbReference>
<dbReference type="Bgee" id="ENSMUSG00000035933">
    <property type="expression patterns" value="Expressed in undifferentiated genital tubercle and 255 other cell types or tissues"/>
</dbReference>
<dbReference type="ExpressionAtlas" id="Q8C0L8">
    <property type="expression patterns" value="baseline and differential"/>
</dbReference>
<dbReference type="GO" id="GO:0005829">
    <property type="term" value="C:cytosol"/>
    <property type="evidence" value="ECO:0007669"/>
    <property type="project" value="UniProtKB-SubCell"/>
</dbReference>
<dbReference type="GO" id="GO:0005794">
    <property type="term" value="C:Golgi apparatus"/>
    <property type="evidence" value="ECO:0000266"/>
    <property type="project" value="MGI"/>
</dbReference>
<dbReference type="GO" id="GO:0000139">
    <property type="term" value="C:Golgi membrane"/>
    <property type="evidence" value="ECO:0007669"/>
    <property type="project" value="UniProtKB-SubCell"/>
</dbReference>
<dbReference type="GO" id="GO:0017119">
    <property type="term" value="C:Golgi transport complex"/>
    <property type="evidence" value="ECO:0007669"/>
    <property type="project" value="Ensembl"/>
</dbReference>
<dbReference type="GO" id="GO:0005654">
    <property type="term" value="C:nucleoplasm"/>
    <property type="evidence" value="ECO:0007669"/>
    <property type="project" value="Ensembl"/>
</dbReference>
<dbReference type="GO" id="GO:0070085">
    <property type="term" value="P:glycosylation"/>
    <property type="evidence" value="ECO:0007669"/>
    <property type="project" value="Ensembl"/>
</dbReference>
<dbReference type="GO" id="GO:0007030">
    <property type="term" value="P:Golgi organization"/>
    <property type="evidence" value="ECO:0007669"/>
    <property type="project" value="Ensembl"/>
</dbReference>
<dbReference type="GO" id="GO:0048219">
    <property type="term" value="P:inter-Golgi cisterna vesicle-mediated transport"/>
    <property type="evidence" value="ECO:0000266"/>
    <property type="project" value="MGI"/>
</dbReference>
<dbReference type="GO" id="GO:0015031">
    <property type="term" value="P:protein transport"/>
    <property type="evidence" value="ECO:0007669"/>
    <property type="project" value="UniProtKB-KW"/>
</dbReference>
<dbReference type="GO" id="GO:0000301">
    <property type="term" value="P:retrograde transport, vesicle recycling within Golgi"/>
    <property type="evidence" value="ECO:0007669"/>
    <property type="project" value="Ensembl"/>
</dbReference>
<dbReference type="InterPro" id="IPR019465">
    <property type="entry name" value="Cog5"/>
</dbReference>
<dbReference type="InterPro" id="IPR048485">
    <property type="entry name" value="COG5_helical"/>
</dbReference>
<dbReference type="InterPro" id="IPR049176">
    <property type="entry name" value="COG5_N"/>
</dbReference>
<dbReference type="PANTHER" id="PTHR13228">
    <property type="entry name" value="CONSERVED OLIGOMERIC GOLGI COMPLEX COMPONENT 5"/>
    <property type="match status" value="1"/>
</dbReference>
<dbReference type="PANTHER" id="PTHR13228:SF3">
    <property type="entry name" value="CONSERVED OLIGOMERIC GOLGI COMPLEX SUBUNIT 5"/>
    <property type="match status" value="1"/>
</dbReference>
<dbReference type="Pfam" id="PF20649">
    <property type="entry name" value="COG5_C"/>
    <property type="match status" value="1"/>
</dbReference>
<dbReference type="Pfam" id="PF10392">
    <property type="entry name" value="COG5_N"/>
    <property type="match status" value="1"/>
</dbReference>
<proteinExistence type="evidence at protein level"/>
<keyword id="KW-0963">Cytoplasm</keyword>
<keyword id="KW-0333">Golgi apparatus</keyword>
<keyword id="KW-0472">Membrane</keyword>
<keyword id="KW-0597">Phosphoprotein</keyword>
<keyword id="KW-0653">Protein transport</keyword>
<keyword id="KW-1185">Reference proteome</keyword>
<keyword id="KW-0813">Transport</keyword>
<accession>Q8C0L8</accession>
<accession>E9QM30</accession>
<gene>
    <name type="primary">Cog5</name>
</gene>
<organism>
    <name type="scientific">Mus musculus</name>
    <name type="common">Mouse</name>
    <dbReference type="NCBI Taxonomy" id="10090"/>
    <lineage>
        <taxon>Eukaryota</taxon>
        <taxon>Metazoa</taxon>
        <taxon>Chordata</taxon>
        <taxon>Craniata</taxon>
        <taxon>Vertebrata</taxon>
        <taxon>Euteleostomi</taxon>
        <taxon>Mammalia</taxon>
        <taxon>Eutheria</taxon>
        <taxon>Euarchontoglires</taxon>
        <taxon>Glires</taxon>
        <taxon>Rodentia</taxon>
        <taxon>Myomorpha</taxon>
        <taxon>Muroidea</taxon>
        <taxon>Muridae</taxon>
        <taxon>Murinae</taxon>
        <taxon>Mus</taxon>
        <taxon>Mus</taxon>
    </lineage>
</organism>
<sequence length="829" mass="91391">MEGGDSTISVAGRGASGSAVVAATVQAILQDDCYSEFLNEDFDVKTYTSQSIHQAVIAEQLAKLAQGISQLDKELHLQVVARHEDLLAQATGIESLEGVLQMMQTRIGALQGAVDRMKSKIVEPYNKIVARTAQLARLQVACDLLRRIIRILYLSKRLQGQLQGGSREITKAAQSLNELDYLSQGIDLSGIEVIENDLLFIARARLEVENQAKRLLEQGVETQNPTQVGTALQVFHNLGTLKETVTSVVDGYCAALEDSINNALDVKVLTQPSQSAVRGGPGRAAMPTPGSTAGFRASLWTNMEKLMDHICAACGQVQHLQKVLTKKRDPVSHICFIEEIIKDGQPEILYMFWNAVTLALSSHFHSATNSSMFLKQAFEGEYPKLLRLYNDLWKRLQQSSQNTQGTFSPSGTPDLCVDLPHMEDDTQDMFRLKRPDYDPEKALKDSLQPYEAAYLSKSLSRLFDPINLVFPPGGRNPPSSDELDGITKTITSELNVAAVDANLTLAVSKNVAKTIQLYAVKSEQLLSTQGDASQVIGPLTEGQKRNVGVVNSLFKLHQSVTKVVASQSSFSATAEQTIMSALKTIHDLMGNAIQPLLTSVADAIEAIIITMHQEDFSGASSSSGKPDVPCSLYMKELQGFIARVMNDYFKHFECLDFVFDNTEAIAQRAIELFIRNASLIRPLGEGGKLRLAADFAQMELAVGPLCRRVSDLGKSYRMLRSFRPLLFQTSEHVADSPAVGDIIPFSIIIQFLFTRAPAELKSPFQRAEWSHARFSQWLDDHPSEKDRLLLLRGALEAYVQSVRSRDGKEFAPVYPIMVQLLQKAMSALQ</sequence>
<comment type="function">
    <text evidence="2">Required for normal Golgi function.</text>
</comment>
<comment type="subunit">
    <text evidence="2">Component of the conserved oligomeric Golgi complex which is composed of eight different subunits and is required for normal Golgi morphology and localization.</text>
</comment>
<comment type="subcellular location">
    <subcellularLocation>
        <location evidence="1">Cytoplasm</location>
        <location evidence="1">Cytosol</location>
    </subcellularLocation>
    <subcellularLocation>
        <location evidence="1">Golgi apparatus membrane</location>
        <topology evidence="1">Peripheral membrane protein</topology>
    </subcellularLocation>
</comment>
<comment type="similarity">
    <text evidence="3">Belongs to the COG5 family.</text>
</comment>
<comment type="sequence caution" evidence="3">
    <conflict type="erroneous initiation">
        <sequence resource="EMBL-CDS" id="BAC27065"/>
    </conflict>
    <text>Extended N-terminus.</text>
</comment>
<feature type="chain" id="PRO_0000320146" description="Conserved oligomeric Golgi complex subunit 5">
    <location>
        <begin position="1"/>
        <end position="829"/>
    </location>
</feature>
<feature type="modified residue" description="Phosphoserine" evidence="1">
    <location>
        <position position="166"/>
    </location>
</feature>
<feature type="sequence conflict" description="In Ref. 1; BAC27065." evidence="3" ref="1">
    <original>G</original>
    <variation>R</variation>
    <location>
        <position position="190"/>
    </location>
</feature>
<feature type="sequence conflict" description="In Ref. 1; BAC27065." evidence="3" ref="1">
    <original>F</original>
    <variation>Y</variation>
    <location>
        <position position="430"/>
    </location>
</feature>
<feature type="sequence conflict" description="In Ref. 1; BAC27065." evidence="3" ref="1">
    <original>L</original>
    <variation>M</variation>
    <location>
        <position position="655"/>
    </location>
</feature>
<feature type="sequence conflict" description="In Ref. 1; BAC27065." evidence="3" ref="1">
    <original>S</original>
    <variation>Y</variation>
    <location>
        <position position="826"/>
    </location>
</feature>